<accession>Q8Q0F4</accession>
<protein>
    <recommendedName>
        <fullName evidence="1">Phosphomethylpyrimidine synthase 1</fullName>
        <ecNumber evidence="1">4.1.99.17</ecNumber>
    </recommendedName>
    <alternativeName>
        <fullName evidence="1">Hydroxymethylpyrimidine phosphate synthase 1</fullName>
        <shortName evidence="1">HMP-P synthase 1</shortName>
        <shortName evidence="1">HMP-phosphate synthase 1</shortName>
        <shortName evidence="1">HMPP synthase 1</shortName>
    </alternativeName>
    <alternativeName>
        <fullName evidence="1">Thiamine biosynthesis protein ThiC 1</fullName>
    </alternativeName>
</protein>
<evidence type="ECO:0000255" key="1">
    <source>
        <dbReference type="HAMAP-Rule" id="MF_00089"/>
    </source>
</evidence>
<evidence type="ECO:0000305" key="2"/>
<keyword id="KW-0004">4Fe-4S</keyword>
<keyword id="KW-0408">Iron</keyword>
<keyword id="KW-0411">Iron-sulfur</keyword>
<keyword id="KW-0456">Lyase</keyword>
<keyword id="KW-0479">Metal-binding</keyword>
<keyword id="KW-0949">S-adenosyl-L-methionine</keyword>
<keyword id="KW-0784">Thiamine biosynthesis</keyword>
<keyword id="KW-0862">Zinc</keyword>
<organism>
    <name type="scientific">Methanosarcina mazei (strain ATCC BAA-159 / DSM 3647 / Goe1 / Go1 / JCM 11833 / OCM 88)</name>
    <name type="common">Methanosarcina frisia</name>
    <dbReference type="NCBI Taxonomy" id="192952"/>
    <lineage>
        <taxon>Archaea</taxon>
        <taxon>Methanobacteriati</taxon>
        <taxon>Methanobacteriota</taxon>
        <taxon>Stenosarchaea group</taxon>
        <taxon>Methanomicrobia</taxon>
        <taxon>Methanosarcinales</taxon>
        <taxon>Methanosarcinaceae</taxon>
        <taxon>Methanosarcina</taxon>
    </lineage>
</organism>
<comment type="function">
    <text evidence="1">Catalyzes the synthesis of the hydroxymethylpyrimidine phosphate (HMP-P) moiety of thiamine from aminoimidazole ribotide (AIR) in a radical S-adenosyl-L-methionine (SAM)-dependent reaction.</text>
</comment>
<comment type="catalytic activity">
    <reaction evidence="1">
        <text>5-amino-1-(5-phospho-beta-D-ribosyl)imidazole + S-adenosyl-L-methionine = 4-amino-2-methyl-5-(phosphooxymethyl)pyrimidine + CO + 5'-deoxyadenosine + formate + L-methionine + 3 H(+)</text>
        <dbReference type="Rhea" id="RHEA:24840"/>
        <dbReference type="ChEBI" id="CHEBI:15378"/>
        <dbReference type="ChEBI" id="CHEBI:15740"/>
        <dbReference type="ChEBI" id="CHEBI:17245"/>
        <dbReference type="ChEBI" id="CHEBI:17319"/>
        <dbReference type="ChEBI" id="CHEBI:57844"/>
        <dbReference type="ChEBI" id="CHEBI:58354"/>
        <dbReference type="ChEBI" id="CHEBI:59789"/>
        <dbReference type="ChEBI" id="CHEBI:137981"/>
        <dbReference type="EC" id="4.1.99.17"/>
    </reaction>
</comment>
<comment type="cofactor">
    <cofactor evidence="1">
        <name>[4Fe-4S] cluster</name>
        <dbReference type="ChEBI" id="CHEBI:49883"/>
    </cofactor>
    <text evidence="1">Binds 1 [4Fe-4S] cluster per subunit. The cluster is coordinated with 3 cysteines and an exchangeable S-adenosyl-L-methionine.</text>
</comment>
<comment type="pathway">
    <text evidence="1">Cofactor biosynthesis; thiamine diphosphate biosynthesis.</text>
</comment>
<comment type="similarity">
    <text evidence="1">Belongs to the ThiC family.</text>
</comment>
<comment type="sequence caution" evidence="2">
    <conflict type="erroneous initiation">
        <sequence resource="EMBL-CDS" id="AAM29878"/>
    </conflict>
</comment>
<proteinExistence type="inferred from homology"/>
<feature type="chain" id="PRO_0000152865" description="Phosphomethylpyrimidine synthase 1">
    <location>
        <begin position="1"/>
        <end position="428"/>
    </location>
</feature>
<feature type="binding site" evidence="1">
    <location>
        <position position="65"/>
    </location>
    <ligand>
        <name>substrate</name>
    </ligand>
</feature>
<feature type="binding site" evidence="1">
    <location>
        <position position="94"/>
    </location>
    <ligand>
        <name>substrate</name>
    </ligand>
</feature>
<feature type="binding site" evidence="1">
    <location>
        <position position="123"/>
    </location>
    <ligand>
        <name>substrate</name>
    </ligand>
</feature>
<feature type="binding site" evidence="1">
    <location>
        <position position="158"/>
    </location>
    <ligand>
        <name>substrate</name>
    </ligand>
</feature>
<feature type="binding site" evidence="1">
    <location>
        <begin position="180"/>
        <end position="182"/>
    </location>
    <ligand>
        <name>substrate</name>
    </ligand>
</feature>
<feature type="binding site" evidence="1">
    <location>
        <begin position="221"/>
        <end position="224"/>
    </location>
    <ligand>
        <name>substrate</name>
    </ligand>
</feature>
<feature type="binding site" evidence="1">
    <location>
        <position position="260"/>
    </location>
    <ligand>
        <name>substrate</name>
    </ligand>
</feature>
<feature type="binding site" evidence="1">
    <location>
        <position position="264"/>
    </location>
    <ligand>
        <name>Zn(2+)</name>
        <dbReference type="ChEBI" id="CHEBI:29105"/>
    </ligand>
</feature>
<feature type="binding site" evidence="1">
    <location>
        <position position="287"/>
    </location>
    <ligand>
        <name>substrate</name>
    </ligand>
</feature>
<feature type="binding site" evidence="1">
    <location>
        <position position="328"/>
    </location>
    <ligand>
        <name>Zn(2+)</name>
        <dbReference type="ChEBI" id="CHEBI:29105"/>
    </ligand>
</feature>
<feature type="binding site" evidence="1">
    <location>
        <position position="405"/>
    </location>
    <ligand>
        <name>[4Fe-4S] cluster</name>
        <dbReference type="ChEBI" id="CHEBI:49883"/>
        <note>4Fe-4S-S-AdoMet</note>
    </ligand>
</feature>
<feature type="binding site" evidence="1">
    <location>
        <position position="408"/>
    </location>
    <ligand>
        <name>[4Fe-4S] cluster</name>
        <dbReference type="ChEBI" id="CHEBI:49883"/>
        <note>4Fe-4S-S-AdoMet</note>
    </ligand>
</feature>
<feature type="binding site" evidence="1">
    <location>
        <position position="412"/>
    </location>
    <ligand>
        <name>[4Fe-4S] cluster</name>
        <dbReference type="ChEBI" id="CHEBI:49883"/>
        <note>4Fe-4S-S-AdoMet</note>
    </ligand>
</feature>
<reference key="1">
    <citation type="journal article" date="2002" name="J. Mol. Microbiol. Biotechnol.">
        <title>The genome of Methanosarcina mazei: evidence for lateral gene transfer between Bacteria and Archaea.</title>
        <authorList>
            <person name="Deppenmeier U."/>
            <person name="Johann A."/>
            <person name="Hartsch T."/>
            <person name="Merkl R."/>
            <person name="Schmitz R.A."/>
            <person name="Martinez-Arias R."/>
            <person name="Henne A."/>
            <person name="Wiezer A."/>
            <person name="Baeumer S."/>
            <person name="Jacobi C."/>
            <person name="Brueggemann H."/>
            <person name="Lienard T."/>
            <person name="Christmann A."/>
            <person name="Boemecke M."/>
            <person name="Steckel S."/>
            <person name="Bhattacharyya A."/>
            <person name="Lykidis A."/>
            <person name="Overbeek R."/>
            <person name="Klenk H.-P."/>
            <person name="Gunsalus R.P."/>
            <person name="Fritz H.-J."/>
            <person name="Gottschalk G."/>
        </authorList>
    </citation>
    <scope>NUCLEOTIDE SEQUENCE [LARGE SCALE GENOMIC DNA]</scope>
    <source>
        <strain>ATCC BAA-159 / DSM 3647 / Goe1 / Go1 / JCM 11833 / OCM 88</strain>
    </source>
</reference>
<sequence length="428" mass="46739">MTLMEDAKKGVITPEIEAVAKAEGIDAEIVRSCVAKGLVAIPKNARRDTLPVGIGKYMSTKINANVGTSRDCIDIDAEIEKAKAAEAFGAHAVMDLSTGGDLDEIRTRILKAVNIPVGTVPIYQAAASRKIVVEMSSDDMFNAVRKHAEQGVDFVTVHAGVNLNSLERLRQSDRIMNVVSRGGSFTLAWMLHNGEDNPFYAEFDYLLEIAKEYDMTLSLGDGMRPGCIADASDRPKFMEFITLGELVKRSREANVQTFVEGPGHVPLNEIELSVRGMKELCDGAPLYLLGPLVTDIAPGFDHITGAIGGAVAGMHGTDFLCMVTPSEHLALPSIEDIKEGLLVTKLAAHTIDLIKEGPRERAWKQDTAMAYARRDLDWEKQFELAIDGDRARKIRDARKTESDACSMCGELCAVKIVKEAFGEKKEEE</sequence>
<name>THIC1_METMA</name>
<dbReference type="EC" id="4.1.99.17" evidence="1"/>
<dbReference type="EMBL" id="AE008384">
    <property type="protein sequence ID" value="AAM29878.1"/>
    <property type="status" value="ALT_INIT"/>
    <property type="molecule type" value="Genomic_DNA"/>
</dbReference>
<dbReference type="SMR" id="Q8Q0F4"/>
<dbReference type="KEGG" id="mma:MM_0182"/>
<dbReference type="PATRIC" id="fig|192952.21.peg.219"/>
<dbReference type="eggNOG" id="arCOG02741">
    <property type="taxonomic scope" value="Archaea"/>
</dbReference>
<dbReference type="HOGENOM" id="CLU_013181_2_2_2"/>
<dbReference type="UniPathway" id="UPA00060"/>
<dbReference type="Proteomes" id="UP000000595">
    <property type="component" value="Chromosome"/>
</dbReference>
<dbReference type="GO" id="GO:0051539">
    <property type="term" value="F:4 iron, 4 sulfur cluster binding"/>
    <property type="evidence" value="ECO:0007669"/>
    <property type="project" value="UniProtKB-KW"/>
</dbReference>
<dbReference type="GO" id="GO:0016830">
    <property type="term" value="F:carbon-carbon lyase activity"/>
    <property type="evidence" value="ECO:0007669"/>
    <property type="project" value="InterPro"/>
</dbReference>
<dbReference type="GO" id="GO:0008270">
    <property type="term" value="F:zinc ion binding"/>
    <property type="evidence" value="ECO:0007669"/>
    <property type="project" value="UniProtKB-UniRule"/>
</dbReference>
<dbReference type="GO" id="GO:0009228">
    <property type="term" value="P:thiamine biosynthetic process"/>
    <property type="evidence" value="ECO:0007669"/>
    <property type="project" value="UniProtKB-KW"/>
</dbReference>
<dbReference type="GO" id="GO:0009229">
    <property type="term" value="P:thiamine diphosphate biosynthetic process"/>
    <property type="evidence" value="ECO:0007669"/>
    <property type="project" value="UniProtKB-UniRule"/>
</dbReference>
<dbReference type="FunFam" id="3.20.20.540:FF:000001">
    <property type="entry name" value="Phosphomethylpyrimidine synthase"/>
    <property type="match status" value="1"/>
</dbReference>
<dbReference type="Gene3D" id="6.10.250.620">
    <property type="match status" value="1"/>
</dbReference>
<dbReference type="Gene3D" id="3.20.20.540">
    <property type="entry name" value="Radical SAM ThiC family, central domain"/>
    <property type="match status" value="1"/>
</dbReference>
<dbReference type="HAMAP" id="MF_00089">
    <property type="entry name" value="ThiC"/>
    <property type="match status" value="1"/>
</dbReference>
<dbReference type="InterPro" id="IPR037509">
    <property type="entry name" value="ThiC"/>
</dbReference>
<dbReference type="InterPro" id="IPR038521">
    <property type="entry name" value="ThiC/Bza_core_dom"/>
</dbReference>
<dbReference type="InterPro" id="IPR002817">
    <property type="entry name" value="ThiC/BzaA/B"/>
</dbReference>
<dbReference type="NCBIfam" id="NF009895">
    <property type="entry name" value="PRK13352.1"/>
    <property type="match status" value="1"/>
</dbReference>
<dbReference type="NCBIfam" id="TIGR00190">
    <property type="entry name" value="thiC"/>
    <property type="match status" value="1"/>
</dbReference>
<dbReference type="PANTHER" id="PTHR30557:SF1">
    <property type="entry name" value="PHOSPHOMETHYLPYRIMIDINE SYNTHASE, CHLOROPLASTIC"/>
    <property type="match status" value="1"/>
</dbReference>
<dbReference type="PANTHER" id="PTHR30557">
    <property type="entry name" value="THIAMINE BIOSYNTHESIS PROTEIN THIC"/>
    <property type="match status" value="1"/>
</dbReference>
<dbReference type="Pfam" id="PF01964">
    <property type="entry name" value="ThiC_Rad_SAM"/>
    <property type="match status" value="1"/>
</dbReference>
<dbReference type="SFLD" id="SFLDF00407">
    <property type="entry name" value="phosphomethylpyrimidine_syntha"/>
    <property type="match status" value="1"/>
</dbReference>
<dbReference type="SFLD" id="SFLDG01114">
    <property type="entry name" value="phosphomethylpyrimidine_syntha"/>
    <property type="match status" value="1"/>
</dbReference>
<dbReference type="SFLD" id="SFLDS00113">
    <property type="entry name" value="Radical_SAM_Phosphomethylpyrim"/>
    <property type="match status" value="1"/>
</dbReference>
<gene>
    <name evidence="1" type="primary">thiC1</name>
    <name type="ordered locus">MM_0182</name>
</gene>